<proteinExistence type="evidence at protein level"/>
<accession>Q9HXB1</accession>
<gene>
    <name type="primary">ivy</name>
    <name type="ordered locus">PA3902</name>
</gene>
<feature type="signal peptide" evidence="2">
    <location>
        <begin position="1"/>
        <end position="24"/>
    </location>
</feature>
<feature type="chain" id="PRO_0000016547" description="Inhibitor of vertebrate lysozyme">
    <location>
        <begin position="25"/>
        <end position="153"/>
    </location>
</feature>
<feature type="site" description="Important for lysozyme inhibition" evidence="1">
    <location>
        <position position="86"/>
    </location>
</feature>
<feature type="disulfide bond">
    <location>
        <begin position="83"/>
        <end position="88"/>
    </location>
</feature>
<feature type="strand" evidence="4">
    <location>
        <begin position="25"/>
        <end position="27"/>
    </location>
</feature>
<feature type="helix" evidence="4">
    <location>
        <begin position="30"/>
        <end position="33"/>
    </location>
</feature>
<feature type="helix" evidence="4">
    <location>
        <begin position="37"/>
        <end position="46"/>
    </location>
</feature>
<feature type="turn" evidence="4">
    <location>
        <begin position="47"/>
        <end position="49"/>
    </location>
</feature>
<feature type="helix" evidence="4">
    <location>
        <begin position="55"/>
        <end position="59"/>
    </location>
</feature>
<feature type="strand" evidence="4">
    <location>
        <begin position="67"/>
        <end position="72"/>
    </location>
</feature>
<feature type="strand" evidence="4">
    <location>
        <begin position="75"/>
        <end position="83"/>
    </location>
</feature>
<feature type="turn" evidence="4">
    <location>
        <begin position="88"/>
        <end position="90"/>
    </location>
</feature>
<feature type="strand" evidence="4">
    <location>
        <begin position="91"/>
        <end position="98"/>
    </location>
</feature>
<feature type="strand" evidence="4">
    <location>
        <begin position="104"/>
        <end position="110"/>
    </location>
</feature>
<feature type="helix" evidence="4">
    <location>
        <begin position="116"/>
        <end position="119"/>
    </location>
</feature>
<feature type="helix" evidence="4">
    <location>
        <begin position="122"/>
        <end position="124"/>
    </location>
</feature>
<feature type="strand" evidence="4">
    <location>
        <begin position="127"/>
        <end position="132"/>
    </location>
</feature>
<feature type="helix" evidence="4">
    <location>
        <begin position="136"/>
        <end position="147"/>
    </location>
</feature>
<evidence type="ECO:0000250" key="1"/>
<evidence type="ECO:0000255" key="2"/>
<evidence type="ECO:0000305" key="3"/>
<evidence type="ECO:0007829" key="4">
    <source>
        <dbReference type="PDB" id="4PS6"/>
    </source>
</evidence>
<reference key="1">
    <citation type="journal article" date="2000" name="Nature">
        <title>Complete genome sequence of Pseudomonas aeruginosa PAO1, an opportunistic pathogen.</title>
        <authorList>
            <person name="Stover C.K."/>
            <person name="Pham X.-Q.T."/>
            <person name="Erwin A.L."/>
            <person name="Mizoguchi S.D."/>
            <person name="Warrener P."/>
            <person name="Hickey M.J."/>
            <person name="Brinkman F.S.L."/>
            <person name="Hufnagle W.O."/>
            <person name="Kowalik D.J."/>
            <person name="Lagrou M."/>
            <person name="Garber R.L."/>
            <person name="Goltry L."/>
            <person name="Tolentino E."/>
            <person name="Westbrock-Wadman S."/>
            <person name="Yuan Y."/>
            <person name="Brody L.L."/>
            <person name="Coulter S.N."/>
            <person name="Folger K.R."/>
            <person name="Kas A."/>
            <person name="Larbig K."/>
            <person name="Lim R.M."/>
            <person name="Smith K.A."/>
            <person name="Spencer D.H."/>
            <person name="Wong G.K.-S."/>
            <person name="Wu Z."/>
            <person name="Paulsen I.T."/>
            <person name="Reizer J."/>
            <person name="Saier M.H. Jr."/>
            <person name="Hancock R.E.W."/>
            <person name="Lory S."/>
            <person name="Olson M.V."/>
        </authorList>
    </citation>
    <scope>NUCLEOTIDE SEQUENCE [LARGE SCALE GENOMIC DNA]</scope>
    <source>
        <strain>ATCC 15692 / DSM 22644 / CIP 104116 / JCM 14847 / LMG 12228 / 1C / PRS 101 / PAO1</strain>
    </source>
</reference>
<reference key="2">
    <citation type="unpublished observations" date="2001-12">
        <authorList>
            <person name="Abergel C."/>
        </authorList>
    </citation>
    <scope>CHARACTERIZATION</scope>
</reference>
<comment type="function">
    <text>Strong inhibitor of lysozyme C.</text>
</comment>
<comment type="subunit">
    <text>Monomer.</text>
</comment>
<comment type="subcellular location">
    <subcellularLocation>
        <location>Periplasm</location>
    </subcellularLocation>
</comment>
<comment type="similarity">
    <text evidence="3">Belongs to the ivy family.</text>
</comment>
<keyword id="KW-0002">3D-structure</keyword>
<keyword id="KW-1015">Disulfide bond</keyword>
<keyword id="KW-0574">Periplasm</keyword>
<keyword id="KW-1185">Reference proteome</keyword>
<keyword id="KW-0732">Signal</keyword>
<dbReference type="EMBL" id="AE004091">
    <property type="protein sequence ID" value="AAG07289.1"/>
    <property type="molecule type" value="Genomic_DNA"/>
</dbReference>
<dbReference type="PIR" id="A83159">
    <property type="entry name" value="A83159"/>
</dbReference>
<dbReference type="RefSeq" id="NP_252591.1">
    <property type="nucleotide sequence ID" value="NC_002516.2"/>
</dbReference>
<dbReference type="RefSeq" id="WP_003093002.1">
    <property type="nucleotide sequence ID" value="NZ_QZGE01000001.1"/>
</dbReference>
<dbReference type="PDB" id="1UUZ">
    <property type="method" value="X-ray"/>
    <property type="resolution" value="1.80 A"/>
    <property type="chains" value="A/B=25-153"/>
</dbReference>
<dbReference type="PDB" id="4PS6">
    <property type="method" value="X-ray"/>
    <property type="resolution" value="1.25 A"/>
    <property type="chains" value="A=25-153"/>
</dbReference>
<dbReference type="PDBsum" id="1UUZ"/>
<dbReference type="PDBsum" id="4PS6"/>
<dbReference type="SMR" id="Q9HXB1"/>
<dbReference type="DIP" id="DIP-60906N"/>
<dbReference type="FunCoup" id="Q9HXB1">
    <property type="interactions" value="48"/>
</dbReference>
<dbReference type="IntAct" id="Q9HXB1">
    <property type="interactions" value="1"/>
</dbReference>
<dbReference type="STRING" id="208964.PA3902"/>
<dbReference type="PaxDb" id="208964-PA3902"/>
<dbReference type="DNASU" id="878927"/>
<dbReference type="GeneID" id="878927"/>
<dbReference type="KEGG" id="pae:PA3902"/>
<dbReference type="PATRIC" id="fig|208964.12.peg.4087"/>
<dbReference type="PseudoCAP" id="PA3902"/>
<dbReference type="HOGENOM" id="CLU_109262_1_0_6"/>
<dbReference type="InParanoid" id="Q9HXB1"/>
<dbReference type="OrthoDB" id="8858386at2"/>
<dbReference type="PhylomeDB" id="Q9HXB1"/>
<dbReference type="BioCyc" id="PAER208964:G1FZ6-3975-MONOMER"/>
<dbReference type="EvolutionaryTrace" id="Q9HXB1"/>
<dbReference type="Proteomes" id="UP000002438">
    <property type="component" value="Chromosome"/>
</dbReference>
<dbReference type="GO" id="GO:0042597">
    <property type="term" value="C:periplasmic space"/>
    <property type="evidence" value="ECO:0007669"/>
    <property type="project" value="UniProtKB-SubCell"/>
</dbReference>
<dbReference type="Gene3D" id="3.40.1420.10">
    <property type="entry name" value="Inhibitor of vertebrate lysozyme"/>
    <property type="match status" value="1"/>
</dbReference>
<dbReference type="InterPro" id="IPR036501">
    <property type="entry name" value="Inhibitor_vert_lysozyme_sf"/>
</dbReference>
<dbReference type="InterPro" id="IPR014453">
    <property type="entry name" value="Inhibitor_vertebrate_lysozyme"/>
</dbReference>
<dbReference type="Pfam" id="PF08816">
    <property type="entry name" value="Ivy"/>
    <property type="match status" value="1"/>
</dbReference>
<dbReference type="PIRSF" id="PIRSF009103">
    <property type="entry name" value="Ivy"/>
    <property type="match status" value="1"/>
</dbReference>
<dbReference type="SUPFAM" id="SSF89872">
    <property type="entry name" value="Inhibitor of vertebrate lysozyme, Ivy"/>
    <property type="match status" value="1"/>
</dbReference>
<organism>
    <name type="scientific">Pseudomonas aeruginosa (strain ATCC 15692 / DSM 22644 / CIP 104116 / JCM 14847 / LMG 12228 / 1C / PRS 101 / PAO1)</name>
    <dbReference type="NCBI Taxonomy" id="208964"/>
    <lineage>
        <taxon>Bacteria</taxon>
        <taxon>Pseudomonadati</taxon>
        <taxon>Pseudomonadota</taxon>
        <taxon>Gammaproteobacteria</taxon>
        <taxon>Pseudomonadales</taxon>
        <taxon>Pseudomonadaceae</taxon>
        <taxon>Pseudomonas</taxon>
    </lineage>
</organism>
<protein>
    <recommendedName>
        <fullName>Inhibitor of vertebrate lysozyme</fullName>
    </recommendedName>
</protein>
<sequence>MNGVSRLLSLALLGAALHWAPAQAEEQPRLFELLGQPGYKATWHAMFKGESDVPKWVSDASGPSSPSTSLSLEGQPYVLANSCKPHDCGNNRLLVAFRGDKSAAYGLQVSLPDEPAEVMQTPSKYATYRWYGEPSRQVRELLMKQLESDPNWK</sequence>
<name>IVY_PSEAE</name>